<protein>
    <recommendedName>
        <fullName>Cytochrome b-c1 complex subunit 7</fullName>
    </recommendedName>
    <alternativeName>
        <fullName>Complex III subunit 7</fullName>
    </alternativeName>
    <alternativeName>
        <fullName>Complex III subunit VII</fullName>
    </alternativeName>
    <alternativeName>
        <fullName>Ubiquinol-cytochrome c reductase complex 14 kDa protein</fullName>
    </alternativeName>
</protein>
<name>QCR7_YARLI</name>
<dbReference type="EMBL" id="CR382131">
    <property type="protein sequence ID" value="CAG80361.1"/>
    <property type="molecule type" value="Genomic_DNA"/>
</dbReference>
<dbReference type="RefSeq" id="XP_504755.1">
    <property type="nucleotide sequence ID" value="XM_504755.1"/>
</dbReference>
<dbReference type="PDB" id="8AB6">
    <property type="method" value="EM"/>
    <property type="resolution" value="2.00 A"/>
    <property type="chains" value="G/R=1-128"/>
</dbReference>
<dbReference type="PDB" id="8AB7">
    <property type="method" value="EM"/>
    <property type="resolution" value="3.30 A"/>
    <property type="chains" value="G/R=1-128"/>
</dbReference>
<dbReference type="PDB" id="8AB8">
    <property type="method" value="EM"/>
    <property type="resolution" value="2.60 A"/>
    <property type="chains" value="G/R=1-128"/>
</dbReference>
<dbReference type="PDB" id="8AB9">
    <property type="method" value="EM"/>
    <property type="resolution" value="3.30 A"/>
    <property type="chains" value="G/R=1-128"/>
</dbReference>
<dbReference type="PDB" id="8ABA">
    <property type="method" value="EM"/>
    <property type="resolution" value="3.20 A"/>
    <property type="chains" value="G/R=1-128"/>
</dbReference>
<dbReference type="PDB" id="8ABB">
    <property type="method" value="EM"/>
    <property type="resolution" value="3.20 A"/>
    <property type="chains" value="G/R=1-128"/>
</dbReference>
<dbReference type="PDB" id="8ABE">
    <property type="method" value="EM"/>
    <property type="resolution" value="2.30 A"/>
    <property type="chains" value="G/R=1-128"/>
</dbReference>
<dbReference type="PDB" id="8ABF">
    <property type="method" value="EM"/>
    <property type="resolution" value="2.30 A"/>
    <property type="chains" value="G/R=1-128"/>
</dbReference>
<dbReference type="PDB" id="8ABG">
    <property type="method" value="EM"/>
    <property type="resolution" value="2.30 A"/>
    <property type="chains" value="G/R=1-128"/>
</dbReference>
<dbReference type="PDB" id="8ABH">
    <property type="method" value="EM"/>
    <property type="resolution" value="3.00 A"/>
    <property type="chains" value="G/R=1-128"/>
</dbReference>
<dbReference type="PDB" id="8ABI">
    <property type="method" value="EM"/>
    <property type="resolution" value="3.00 A"/>
    <property type="chains" value="G/R=1-128"/>
</dbReference>
<dbReference type="PDB" id="8ABJ">
    <property type="method" value="EM"/>
    <property type="resolution" value="3.70 A"/>
    <property type="chains" value="G/R=1-128"/>
</dbReference>
<dbReference type="PDB" id="8ABK">
    <property type="method" value="EM"/>
    <property type="resolution" value="2.50 A"/>
    <property type="chains" value="G/R=1-128"/>
</dbReference>
<dbReference type="PDB" id="8ABL">
    <property type="method" value="EM"/>
    <property type="resolution" value="2.10 A"/>
    <property type="chains" value="G/R=1-128"/>
</dbReference>
<dbReference type="PDB" id="8ABM">
    <property type="method" value="EM"/>
    <property type="resolution" value="2.80 A"/>
    <property type="chains" value="G/R=1-128"/>
</dbReference>
<dbReference type="PDB" id="8AC3">
    <property type="method" value="EM"/>
    <property type="resolution" value="2.80 A"/>
    <property type="chains" value="G/R=1-128"/>
</dbReference>
<dbReference type="PDB" id="8AC4">
    <property type="method" value="EM"/>
    <property type="resolution" value="2.70 A"/>
    <property type="chains" value="G/R=1-128"/>
</dbReference>
<dbReference type="PDB" id="8AC5">
    <property type="method" value="EM"/>
    <property type="resolution" value="3.10 A"/>
    <property type="chains" value="G/R=1-128"/>
</dbReference>
<dbReference type="PDBsum" id="8AB6"/>
<dbReference type="PDBsum" id="8AB7"/>
<dbReference type="PDBsum" id="8AB8"/>
<dbReference type="PDBsum" id="8AB9"/>
<dbReference type="PDBsum" id="8ABA"/>
<dbReference type="PDBsum" id="8ABB"/>
<dbReference type="PDBsum" id="8ABE"/>
<dbReference type="PDBsum" id="8ABF"/>
<dbReference type="PDBsum" id="8ABG"/>
<dbReference type="PDBsum" id="8ABH"/>
<dbReference type="PDBsum" id="8ABI"/>
<dbReference type="PDBsum" id="8ABJ"/>
<dbReference type="PDBsum" id="8ABK"/>
<dbReference type="PDBsum" id="8ABL"/>
<dbReference type="PDBsum" id="8ABM"/>
<dbReference type="PDBsum" id="8AC3"/>
<dbReference type="PDBsum" id="8AC4"/>
<dbReference type="PDBsum" id="8AC5"/>
<dbReference type="EMDB" id="EMD-15312"/>
<dbReference type="EMDB" id="EMD-15313"/>
<dbReference type="EMDB" id="EMD-15314"/>
<dbReference type="EMDB" id="EMD-15315"/>
<dbReference type="EMDB" id="EMD-15316"/>
<dbReference type="EMDB" id="EMD-15317"/>
<dbReference type="EMDB" id="EMD-15318"/>
<dbReference type="EMDB" id="EMD-15319"/>
<dbReference type="EMDB" id="EMD-15320"/>
<dbReference type="EMDB" id="EMD-15321"/>
<dbReference type="EMDB" id="EMD-15322"/>
<dbReference type="EMDB" id="EMD-15323"/>
<dbReference type="EMDB" id="EMD-15324"/>
<dbReference type="EMDB" id="EMD-15325"/>
<dbReference type="EMDB" id="EMD-15326"/>
<dbReference type="EMDB" id="EMD-15332"/>
<dbReference type="EMDB" id="EMD-15333"/>
<dbReference type="EMDB" id="EMD-15334"/>
<dbReference type="SMR" id="Q6C3K7"/>
<dbReference type="FunCoup" id="Q6C3K7">
    <property type="interactions" value="221"/>
</dbReference>
<dbReference type="STRING" id="284591.Q6C3K7"/>
<dbReference type="EnsemblFungi" id="CAG80361">
    <property type="protein sequence ID" value="CAG80361"/>
    <property type="gene ID" value="YALI0_E34037g"/>
</dbReference>
<dbReference type="KEGG" id="yli:2911660"/>
<dbReference type="VEuPathDB" id="FungiDB:YALI0_E34037g"/>
<dbReference type="HOGENOM" id="CLU_115154_1_0_1"/>
<dbReference type="InParanoid" id="Q6C3K7"/>
<dbReference type="OMA" id="PLAQWYT"/>
<dbReference type="OrthoDB" id="2586at4891"/>
<dbReference type="Proteomes" id="UP000001300">
    <property type="component" value="Chromosome E"/>
</dbReference>
<dbReference type="GO" id="GO:0099617">
    <property type="term" value="C:matrix side of mitochondrial inner membrane"/>
    <property type="evidence" value="ECO:0007669"/>
    <property type="project" value="EnsemblFungi"/>
</dbReference>
<dbReference type="GO" id="GO:0045275">
    <property type="term" value="C:respiratory chain complex III"/>
    <property type="evidence" value="ECO:0000318"/>
    <property type="project" value="GO_Central"/>
</dbReference>
<dbReference type="GO" id="GO:0008121">
    <property type="term" value="F:ubiquinol-cytochrome-c reductase activity"/>
    <property type="evidence" value="ECO:0007669"/>
    <property type="project" value="EnsemblFungi"/>
</dbReference>
<dbReference type="GO" id="GO:0006122">
    <property type="term" value="P:mitochondrial electron transport, ubiquinol to cytochrome c"/>
    <property type="evidence" value="ECO:0000318"/>
    <property type="project" value="GO_Central"/>
</dbReference>
<dbReference type="GO" id="GO:0034551">
    <property type="term" value="P:mitochondrial respiratory chain complex III assembly"/>
    <property type="evidence" value="ECO:0007669"/>
    <property type="project" value="EnsemblFungi"/>
</dbReference>
<dbReference type="FunFam" id="1.10.1090.10:FF:000001">
    <property type="entry name" value="Cytochrome b-c1 complex subunit 7"/>
    <property type="match status" value="1"/>
</dbReference>
<dbReference type="Gene3D" id="1.10.1090.10">
    <property type="entry name" value="Cytochrome b-c1 complex subunit 7"/>
    <property type="match status" value="1"/>
</dbReference>
<dbReference type="InterPro" id="IPR003197">
    <property type="entry name" value="QCR7"/>
</dbReference>
<dbReference type="InterPro" id="IPR036544">
    <property type="entry name" value="QCR7_sf"/>
</dbReference>
<dbReference type="PANTHER" id="PTHR12022:SF0">
    <property type="entry name" value="CYTOCHROME B-C1 COMPLEX SUBUNIT 7"/>
    <property type="match status" value="1"/>
</dbReference>
<dbReference type="PANTHER" id="PTHR12022">
    <property type="entry name" value="UBIQUINOL-CYTOCHROME C REDUCTASE COMPLEX 14 KD PROTEIN"/>
    <property type="match status" value="1"/>
</dbReference>
<dbReference type="Pfam" id="PF02271">
    <property type="entry name" value="UCR_14kD"/>
    <property type="match status" value="1"/>
</dbReference>
<dbReference type="PIRSF" id="PIRSF000022">
    <property type="entry name" value="Bc1_14K"/>
    <property type="match status" value="1"/>
</dbReference>
<dbReference type="SUPFAM" id="SSF81524">
    <property type="entry name" value="14 kDa protein of cytochrome bc1 complex (Ubiquinol-cytochrome c reductase)"/>
    <property type="match status" value="1"/>
</dbReference>
<keyword id="KW-0002">3D-structure</keyword>
<keyword id="KW-0249">Electron transport</keyword>
<keyword id="KW-0472">Membrane</keyword>
<keyword id="KW-0496">Mitochondrion</keyword>
<keyword id="KW-0999">Mitochondrion inner membrane</keyword>
<keyword id="KW-1185">Reference proteome</keyword>
<keyword id="KW-0679">Respiratory chain</keyword>
<keyword id="KW-0813">Transport</keyword>
<feature type="chain" id="PRO_0000193538" description="Cytochrome b-c1 complex subunit 7">
    <location>
        <begin position="1"/>
        <end position="128"/>
    </location>
</feature>
<feature type="helix" evidence="3">
    <location>
        <begin position="4"/>
        <end position="16"/>
    </location>
</feature>
<feature type="helix" evidence="3">
    <location>
        <begin position="18"/>
        <end position="35"/>
    </location>
</feature>
<feature type="helix" evidence="3">
    <location>
        <begin position="37"/>
        <end position="40"/>
    </location>
</feature>
<feature type="helix" evidence="3">
    <location>
        <begin position="44"/>
        <end position="47"/>
    </location>
</feature>
<feature type="helix" evidence="3">
    <location>
        <begin position="53"/>
        <end position="60"/>
    </location>
</feature>
<feature type="helix" evidence="3">
    <location>
        <begin position="64"/>
        <end position="82"/>
    </location>
</feature>
<feature type="helix" evidence="3">
    <location>
        <begin position="89"/>
        <end position="91"/>
    </location>
</feature>
<feature type="helix" evidence="3">
    <location>
        <begin position="95"/>
        <end position="97"/>
    </location>
</feature>
<feature type="helix" evidence="3">
    <location>
        <begin position="103"/>
        <end position="119"/>
    </location>
</feature>
<feature type="strand" evidence="3">
    <location>
        <begin position="122"/>
        <end position="124"/>
    </location>
</feature>
<gene>
    <name type="primary">QCR7</name>
    <name type="ordered locus">YALI0E34037g</name>
</gene>
<proteinExistence type="evidence at protein level"/>
<evidence type="ECO:0000250" key="1">
    <source>
        <dbReference type="UniProtKB" id="P00128"/>
    </source>
</evidence>
<evidence type="ECO:0000305" key="2"/>
<evidence type="ECO:0007829" key="3">
    <source>
        <dbReference type="PDB" id="8AB6"/>
    </source>
</evidence>
<organism>
    <name type="scientific">Yarrowia lipolytica (strain CLIB 122 / E 150)</name>
    <name type="common">Yeast</name>
    <name type="synonym">Candida lipolytica</name>
    <dbReference type="NCBI Taxonomy" id="284591"/>
    <lineage>
        <taxon>Eukaryota</taxon>
        <taxon>Fungi</taxon>
        <taxon>Dikarya</taxon>
        <taxon>Ascomycota</taxon>
        <taxon>Saccharomycotina</taxon>
        <taxon>Dipodascomycetes</taxon>
        <taxon>Dipodascales</taxon>
        <taxon>Dipodascales incertae sedis</taxon>
        <taxon>Yarrowia</taxon>
    </lineage>
</organism>
<reference key="1">
    <citation type="journal article" date="2004" name="Nature">
        <title>Genome evolution in yeasts.</title>
        <authorList>
            <person name="Dujon B."/>
            <person name="Sherman D."/>
            <person name="Fischer G."/>
            <person name="Durrens P."/>
            <person name="Casaregola S."/>
            <person name="Lafontaine I."/>
            <person name="de Montigny J."/>
            <person name="Marck C."/>
            <person name="Neuveglise C."/>
            <person name="Talla E."/>
            <person name="Goffard N."/>
            <person name="Frangeul L."/>
            <person name="Aigle M."/>
            <person name="Anthouard V."/>
            <person name="Babour A."/>
            <person name="Barbe V."/>
            <person name="Barnay S."/>
            <person name="Blanchin S."/>
            <person name="Beckerich J.-M."/>
            <person name="Beyne E."/>
            <person name="Bleykasten C."/>
            <person name="Boisrame A."/>
            <person name="Boyer J."/>
            <person name="Cattolico L."/>
            <person name="Confanioleri F."/>
            <person name="de Daruvar A."/>
            <person name="Despons L."/>
            <person name="Fabre E."/>
            <person name="Fairhead C."/>
            <person name="Ferry-Dumazet H."/>
            <person name="Groppi A."/>
            <person name="Hantraye F."/>
            <person name="Hennequin C."/>
            <person name="Jauniaux N."/>
            <person name="Joyet P."/>
            <person name="Kachouri R."/>
            <person name="Kerrest A."/>
            <person name="Koszul R."/>
            <person name="Lemaire M."/>
            <person name="Lesur I."/>
            <person name="Ma L."/>
            <person name="Muller H."/>
            <person name="Nicaud J.-M."/>
            <person name="Nikolski M."/>
            <person name="Oztas S."/>
            <person name="Ozier-Kalogeropoulos O."/>
            <person name="Pellenz S."/>
            <person name="Potier S."/>
            <person name="Richard G.-F."/>
            <person name="Straub M.-L."/>
            <person name="Suleau A."/>
            <person name="Swennen D."/>
            <person name="Tekaia F."/>
            <person name="Wesolowski-Louvel M."/>
            <person name="Westhof E."/>
            <person name="Wirth B."/>
            <person name="Zeniou-Meyer M."/>
            <person name="Zivanovic Y."/>
            <person name="Bolotin-Fukuhara M."/>
            <person name="Thierry A."/>
            <person name="Bouchier C."/>
            <person name="Caudron B."/>
            <person name="Scarpelli C."/>
            <person name="Gaillardin C."/>
            <person name="Weissenbach J."/>
            <person name="Wincker P."/>
            <person name="Souciet J.-L."/>
        </authorList>
    </citation>
    <scope>NUCLEOTIDE SEQUENCE [LARGE SCALE GENOMIC DNA]</scope>
    <source>
        <strain>CLIB 122 / E 150</strain>
    </source>
</reference>
<sequence length="128" mass="14656">MASITSVVKTSELILKSPLLSKIVVPLAKTYVKFSGYRQLGFKMNDLIIEETPNMQLALRRLPPTESYDRVYRLIRATQFSLSHKLATGNDITKPEEDDHYLIPYILDVEAEAFEKDALDNLEVVKRK</sequence>
<accession>Q6C3K7</accession>
<comment type="function">
    <text evidence="1">Component of the ubiquinol-cytochrome c oxidoreductase, a multisubunit transmembrane complex that is part of the mitochondrial electron transport chain which drives oxidative phosphorylation. The respiratory chain contains 3 multisubunit complexes succinate dehydrogenase (complex II, CII), ubiquinol-cytochrome c oxidoreductase (cytochrome b-c1 complex, complex III, CIII) and cytochrome c oxidase (complex IV, CIV), that cooperate to transfer electrons derived from NADH and succinate to molecular oxygen, creating an electrochemical gradient over the inner membrane that drives transmembrane transport and the ATP synthase. The cytochrome b-c1 complex catalyzes electron transfer from ubiquinol to cytochrome c, linking this redox reaction to translocation of protons across the mitochondrial inner membrane, with protons being carried across the membrane as hydrogens on the quinol. In the process called Q cycle, 2 protons are consumed from the matrix, 4 protons are released into the intermembrane space and 2 electrons are passed to cytochrome c.</text>
</comment>
<comment type="subunit">
    <text evidence="1">Component of the ubiquinol-cytochrome c oxidoreductase (cytochrome b-c1 complex, complex III, CIII), a multisubunit enzyme composed of 3 respiratory subunits cytochrome b, cytochrome c1 and Rieske protein, 2 core protein subunits, and additional low-molecular weight protein subunits. The complex exists as an obligatory dimer and forms supercomplexes (SCs) in the inner mitochondrial membrane with cytochrome c oxidase (complex IV, CIV).</text>
</comment>
<comment type="subcellular location">
    <subcellularLocation>
        <location evidence="1">Mitochondrion inner membrane</location>
        <topology evidence="1">Peripheral membrane protein</topology>
        <orientation evidence="1">Matrix side</orientation>
    </subcellularLocation>
</comment>
<comment type="similarity">
    <text evidence="2">Belongs to the UQCRB/QCR7 family.</text>
</comment>